<evidence type="ECO:0000255" key="1">
    <source>
        <dbReference type="HAMAP-Rule" id="MF_01300"/>
    </source>
</evidence>
<sequence>MAAATDIGTRDVPSQTGKKPWYSILYVQVLIAILIGIVVGWLFPNLATNDWIKALGDGFIKLIKMVIAPIIFCTVVSGIAHIQNASKVGRVGVKALVYFEIVSTFALLLGLIVGNLAPIGHGLAAKPDAAAVANYVKQAEAQKSVDFVLNIIPDSVVGALARGDILQVLLFAILFGFALMALGERGHRLRDIIDDTAHAVFGVIAIVMKAAPVGAFGAMAFTIGKYGPAALGNLIGLIALFYITAGLFVVIVLGLIARFIGFSIFKFVAYIKDELLIVLGTSSSESALPQLMEKLERLGCSKPVVGLVVPTGYSFNLDGTNIYMTLATLFISQALGVDLSFSQQVTILIVAMLTSKGASGVTGAGFITLAATLSVVNPALVPGMAIVFSIDKFMSEVRALTNITGNGIAAVFVSWWEGELDHDLLQRRLNQQIDPSDVETAVTTG</sequence>
<proteinExistence type="inferred from homology"/>
<comment type="function">
    <text evidence="1">Responsible for the transport of dicarboxylates such as succinate, fumarate, and malate from the periplasm across the membrane.</text>
</comment>
<comment type="subcellular location">
    <subcellularLocation>
        <location evidence="1">Cell inner membrane</location>
        <topology evidence="1">Multi-pass membrane protein</topology>
    </subcellularLocation>
</comment>
<comment type="similarity">
    <text evidence="1">Belongs to the dicarboxylate/amino acid:cation symporter (DAACS) (TC 2.A.23) family.</text>
</comment>
<organism>
    <name type="scientific">Bradyrhizobium sp. (strain ORS 278)</name>
    <dbReference type="NCBI Taxonomy" id="114615"/>
    <lineage>
        <taxon>Bacteria</taxon>
        <taxon>Pseudomonadati</taxon>
        <taxon>Pseudomonadota</taxon>
        <taxon>Alphaproteobacteria</taxon>
        <taxon>Hyphomicrobiales</taxon>
        <taxon>Nitrobacteraceae</taxon>
        <taxon>Bradyrhizobium</taxon>
    </lineage>
</organism>
<accession>A4YTR6</accession>
<feature type="chain" id="PRO_0000321974" description="C4-dicarboxylate transport protein 2">
    <location>
        <begin position="1"/>
        <end position="445"/>
    </location>
</feature>
<feature type="transmembrane region" description="Helical" evidence="1">
    <location>
        <begin position="24"/>
        <end position="44"/>
    </location>
</feature>
<feature type="transmembrane region" description="Helical" evidence="1">
    <location>
        <begin position="62"/>
        <end position="82"/>
    </location>
</feature>
<feature type="transmembrane region" description="Helical" evidence="1">
    <location>
        <begin position="96"/>
        <end position="116"/>
    </location>
</feature>
<feature type="transmembrane region" description="Helical" evidence="1">
    <location>
        <begin position="163"/>
        <end position="183"/>
    </location>
</feature>
<feature type="transmembrane region" description="Helical" evidence="1">
    <location>
        <begin position="201"/>
        <end position="221"/>
    </location>
</feature>
<feature type="transmembrane region" description="Helical" evidence="1">
    <location>
        <begin position="237"/>
        <end position="257"/>
    </location>
</feature>
<feature type="transmembrane region" description="Helical" evidence="1">
    <location>
        <begin position="334"/>
        <end position="354"/>
    </location>
</feature>
<feature type="transmembrane region" description="Helical" evidence="1">
    <location>
        <begin position="366"/>
        <end position="386"/>
    </location>
</feature>
<gene>
    <name evidence="1" type="primary">dctA2</name>
    <name type="ordered locus">BRADO3510</name>
</gene>
<dbReference type="EMBL" id="CU234118">
    <property type="protein sequence ID" value="CAL77292.1"/>
    <property type="molecule type" value="Genomic_DNA"/>
</dbReference>
<dbReference type="RefSeq" id="WP_011926438.1">
    <property type="nucleotide sequence ID" value="NC_009445.1"/>
</dbReference>
<dbReference type="SMR" id="A4YTR6"/>
<dbReference type="STRING" id="114615.BRADO3510"/>
<dbReference type="KEGG" id="bra:BRADO3510"/>
<dbReference type="eggNOG" id="COG1301">
    <property type="taxonomic scope" value="Bacteria"/>
</dbReference>
<dbReference type="HOGENOM" id="CLU_019375_7_0_5"/>
<dbReference type="OrthoDB" id="9766690at2"/>
<dbReference type="Proteomes" id="UP000001994">
    <property type="component" value="Chromosome"/>
</dbReference>
<dbReference type="GO" id="GO:0005886">
    <property type="term" value="C:plasma membrane"/>
    <property type="evidence" value="ECO:0007669"/>
    <property type="project" value="UniProtKB-SubCell"/>
</dbReference>
<dbReference type="GO" id="GO:0015138">
    <property type="term" value="F:fumarate transmembrane transporter activity"/>
    <property type="evidence" value="ECO:0007669"/>
    <property type="project" value="TreeGrafter"/>
</dbReference>
<dbReference type="GO" id="GO:0015366">
    <property type="term" value="F:malate:proton symporter activity"/>
    <property type="evidence" value="ECO:0007669"/>
    <property type="project" value="TreeGrafter"/>
</dbReference>
<dbReference type="GO" id="GO:0015141">
    <property type="term" value="F:succinate transmembrane transporter activity"/>
    <property type="evidence" value="ECO:0007669"/>
    <property type="project" value="TreeGrafter"/>
</dbReference>
<dbReference type="GO" id="GO:0070778">
    <property type="term" value="P:L-aspartate transmembrane transport"/>
    <property type="evidence" value="ECO:0007669"/>
    <property type="project" value="TreeGrafter"/>
</dbReference>
<dbReference type="FunFam" id="1.10.3860.10:FF:000001">
    <property type="entry name" value="C4-dicarboxylate transport protein"/>
    <property type="match status" value="1"/>
</dbReference>
<dbReference type="Gene3D" id="1.10.3860.10">
    <property type="entry name" value="Sodium:dicarboxylate symporter"/>
    <property type="match status" value="1"/>
</dbReference>
<dbReference type="HAMAP" id="MF_01300">
    <property type="entry name" value="C4_dicarb_transport"/>
    <property type="match status" value="1"/>
</dbReference>
<dbReference type="InterPro" id="IPR023954">
    <property type="entry name" value="C4_dicarb_transport"/>
</dbReference>
<dbReference type="InterPro" id="IPR001991">
    <property type="entry name" value="Na-dicarboxylate_symporter"/>
</dbReference>
<dbReference type="InterPro" id="IPR018107">
    <property type="entry name" value="Na-dicarboxylate_symporter_CS"/>
</dbReference>
<dbReference type="InterPro" id="IPR036458">
    <property type="entry name" value="Na:dicarbo_symporter_sf"/>
</dbReference>
<dbReference type="NCBIfam" id="NF002461">
    <property type="entry name" value="PRK01663.1"/>
    <property type="match status" value="1"/>
</dbReference>
<dbReference type="PANTHER" id="PTHR42865:SF1">
    <property type="entry name" value="AEROBIC C4-DICARBOXYLATE TRANSPORT PROTEIN"/>
    <property type="match status" value="1"/>
</dbReference>
<dbReference type="PANTHER" id="PTHR42865">
    <property type="entry name" value="PROTON/GLUTAMATE-ASPARTATE SYMPORTER"/>
    <property type="match status" value="1"/>
</dbReference>
<dbReference type="Pfam" id="PF00375">
    <property type="entry name" value="SDF"/>
    <property type="match status" value="1"/>
</dbReference>
<dbReference type="PRINTS" id="PR00173">
    <property type="entry name" value="EDTRNSPORT"/>
</dbReference>
<dbReference type="SUPFAM" id="SSF118215">
    <property type="entry name" value="Proton glutamate symport protein"/>
    <property type="match status" value="1"/>
</dbReference>
<dbReference type="PROSITE" id="PS00714">
    <property type="entry name" value="NA_DICARBOXYL_SYMP_2"/>
    <property type="match status" value="1"/>
</dbReference>
<reference key="1">
    <citation type="journal article" date="2007" name="Science">
        <title>Legumes symbioses: absence of nod genes in photosynthetic bradyrhizobia.</title>
        <authorList>
            <person name="Giraud E."/>
            <person name="Moulin L."/>
            <person name="Vallenet D."/>
            <person name="Barbe V."/>
            <person name="Cytryn E."/>
            <person name="Avarre J.-C."/>
            <person name="Jaubert M."/>
            <person name="Simon D."/>
            <person name="Cartieaux F."/>
            <person name="Prin Y."/>
            <person name="Bena G."/>
            <person name="Hannibal L."/>
            <person name="Fardoux J."/>
            <person name="Kojadinovic M."/>
            <person name="Vuillet L."/>
            <person name="Lajus A."/>
            <person name="Cruveiller S."/>
            <person name="Rouy Z."/>
            <person name="Mangenot S."/>
            <person name="Segurens B."/>
            <person name="Dossat C."/>
            <person name="Franck W.L."/>
            <person name="Chang W.-S."/>
            <person name="Saunders E."/>
            <person name="Bruce D."/>
            <person name="Richardson P."/>
            <person name="Normand P."/>
            <person name="Dreyfus B."/>
            <person name="Pignol D."/>
            <person name="Stacey G."/>
            <person name="Emerich D."/>
            <person name="Vermeglio A."/>
            <person name="Medigue C."/>
            <person name="Sadowsky M."/>
        </authorList>
    </citation>
    <scope>NUCLEOTIDE SEQUENCE [LARGE SCALE GENOMIC DNA]</scope>
    <source>
        <strain>ORS 278</strain>
    </source>
</reference>
<protein>
    <recommendedName>
        <fullName evidence="1">C4-dicarboxylate transport protein 2</fullName>
    </recommendedName>
</protein>
<keyword id="KW-0997">Cell inner membrane</keyword>
<keyword id="KW-1003">Cell membrane</keyword>
<keyword id="KW-0472">Membrane</keyword>
<keyword id="KW-1185">Reference proteome</keyword>
<keyword id="KW-0769">Symport</keyword>
<keyword id="KW-0812">Transmembrane</keyword>
<keyword id="KW-1133">Transmembrane helix</keyword>
<keyword id="KW-0813">Transport</keyword>
<name>DCTA2_BRASO</name>